<accession>B0BVQ6</accession>
<gene>
    <name evidence="1" type="primary">hemE</name>
    <name type="ordered locus">RrIowa_1604</name>
</gene>
<name>DCUP_RICRO</name>
<reference key="1">
    <citation type="journal article" date="2008" name="Infect. Immun.">
        <title>Genomic comparison of virulent Rickettsia rickettsii Sheila Smith and avirulent Rickettsia rickettsii Iowa.</title>
        <authorList>
            <person name="Ellison D.W."/>
            <person name="Clark T.R."/>
            <person name="Sturdevant D.E."/>
            <person name="Virtaneva K."/>
            <person name="Porcella S.F."/>
            <person name="Hackstadt T."/>
        </authorList>
    </citation>
    <scope>NUCLEOTIDE SEQUENCE [LARGE SCALE GENOMIC DNA]</scope>
    <source>
        <strain>Iowa</strain>
    </source>
</reference>
<organism>
    <name type="scientific">Rickettsia rickettsii (strain Iowa)</name>
    <dbReference type="NCBI Taxonomy" id="452659"/>
    <lineage>
        <taxon>Bacteria</taxon>
        <taxon>Pseudomonadati</taxon>
        <taxon>Pseudomonadota</taxon>
        <taxon>Alphaproteobacteria</taxon>
        <taxon>Rickettsiales</taxon>
        <taxon>Rickettsiaceae</taxon>
        <taxon>Rickettsieae</taxon>
        <taxon>Rickettsia</taxon>
        <taxon>spotted fever group</taxon>
    </lineage>
</organism>
<keyword id="KW-0963">Cytoplasm</keyword>
<keyword id="KW-0210">Decarboxylase</keyword>
<keyword id="KW-0456">Lyase</keyword>
<keyword id="KW-0627">Porphyrin biosynthesis</keyword>
<comment type="function">
    <text evidence="1">Catalyzes the decarboxylation of four acetate groups of uroporphyrinogen-III to yield coproporphyrinogen-III.</text>
</comment>
<comment type="catalytic activity">
    <reaction evidence="1">
        <text>uroporphyrinogen III + 4 H(+) = coproporphyrinogen III + 4 CO2</text>
        <dbReference type="Rhea" id="RHEA:19865"/>
        <dbReference type="ChEBI" id="CHEBI:15378"/>
        <dbReference type="ChEBI" id="CHEBI:16526"/>
        <dbReference type="ChEBI" id="CHEBI:57308"/>
        <dbReference type="ChEBI" id="CHEBI:57309"/>
        <dbReference type="EC" id="4.1.1.37"/>
    </reaction>
</comment>
<comment type="pathway">
    <text evidence="1">Porphyrin-containing compound metabolism; protoporphyrin-IX biosynthesis; coproporphyrinogen-III from 5-aminolevulinate: step 4/4.</text>
</comment>
<comment type="subunit">
    <text evidence="1">Homodimer.</text>
</comment>
<comment type="subcellular location">
    <subcellularLocation>
        <location evidence="1">Cytoplasm</location>
    </subcellularLocation>
</comment>
<comment type="similarity">
    <text evidence="1">Belongs to the uroporphyrinogen decarboxylase family.</text>
</comment>
<evidence type="ECO:0000255" key="1">
    <source>
        <dbReference type="HAMAP-Rule" id="MF_00218"/>
    </source>
</evidence>
<feature type="chain" id="PRO_1000078082" description="Uroporphyrinogen decarboxylase">
    <location>
        <begin position="1"/>
        <end position="346"/>
    </location>
</feature>
<feature type="binding site" evidence="1">
    <location>
        <begin position="21"/>
        <end position="25"/>
    </location>
    <ligand>
        <name>substrate</name>
    </ligand>
</feature>
<feature type="binding site" evidence="1">
    <location>
        <position position="71"/>
    </location>
    <ligand>
        <name>substrate</name>
    </ligand>
</feature>
<feature type="binding site" evidence="1">
    <location>
        <position position="146"/>
    </location>
    <ligand>
        <name>substrate</name>
    </ligand>
</feature>
<feature type="binding site" evidence="1">
    <location>
        <position position="201"/>
    </location>
    <ligand>
        <name>substrate</name>
    </ligand>
</feature>
<feature type="binding site" evidence="1">
    <location>
        <position position="316"/>
    </location>
    <ligand>
        <name>substrate</name>
    </ligand>
</feature>
<feature type="site" description="Transition state stabilizer" evidence="1">
    <location>
        <position position="71"/>
    </location>
</feature>
<dbReference type="EC" id="4.1.1.37" evidence="1"/>
<dbReference type="EMBL" id="CP000766">
    <property type="protein sequence ID" value="ABY73316.1"/>
    <property type="molecule type" value="Genomic_DNA"/>
</dbReference>
<dbReference type="RefSeq" id="WP_012151475.1">
    <property type="nucleotide sequence ID" value="NC_010263.3"/>
</dbReference>
<dbReference type="SMR" id="B0BVQ6"/>
<dbReference type="GeneID" id="79937962"/>
<dbReference type="KEGG" id="rrj:RrIowa_1604"/>
<dbReference type="eggNOG" id="COG0407">
    <property type="taxonomic scope" value="Bacteria"/>
</dbReference>
<dbReference type="HOGENOM" id="CLU_040933_0_0_5"/>
<dbReference type="UniPathway" id="UPA00251">
    <property type="reaction ID" value="UER00321"/>
</dbReference>
<dbReference type="Proteomes" id="UP000000796">
    <property type="component" value="Chromosome"/>
</dbReference>
<dbReference type="GO" id="GO:0005829">
    <property type="term" value="C:cytosol"/>
    <property type="evidence" value="ECO:0007669"/>
    <property type="project" value="TreeGrafter"/>
</dbReference>
<dbReference type="GO" id="GO:0004853">
    <property type="term" value="F:uroporphyrinogen decarboxylase activity"/>
    <property type="evidence" value="ECO:0007669"/>
    <property type="project" value="UniProtKB-UniRule"/>
</dbReference>
<dbReference type="GO" id="GO:0006782">
    <property type="term" value="P:protoporphyrinogen IX biosynthetic process"/>
    <property type="evidence" value="ECO:0007669"/>
    <property type="project" value="UniProtKB-UniRule"/>
</dbReference>
<dbReference type="CDD" id="cd00717">
    <property type="entry name" value="URO-D"/>
    <property type="match status" value="1"/>
</dbReference>
<dbReference type="FunFam" id="3.20.20.210:FF:000007">
    <property type="entry name" value="Uroporphyrinogen decarboxylase"/>
    <property type="match status" value="1"/>
</dbReference>
<dbReference type="Gene3D" id="3.20.20.210">
    <property type="match status" value="1"/>
</dbReference>
<dbReference type="HAMAP" id="MF_00218">
    <property type="entry name" value="URO_D"/>
    <property type="match status" value="1"/>
</dbReference>
<dbReference type="InterPro" id="IPR038071">
    <property type="entry name" value="UROD/MetE-like_sf"/>
</dbReference>
<dbReference type="InterPro" id="IPR006361">
    <property type="entry name" value="Uroporphyrinogen_deCO2ase_HemE"/>
</dbReference>
<dbReference type="InterPro" id="IPR000257">
    <property type="entry name" value="Uroporphyrinogen_deCOase"/>
</dbReference>
<dbReference type="NCBIfam" id="TIGR01464">
    <property type="entry name" value="hemE"/>
    <property type="match status" value="1"/>
</dbReference>
<dbReference type="PANTHER" id="PTHR21091">
    <property type="entry name" value="METHYLTETRAHYDROFOLATE:HOMOCYSTEINE METHYLTRANSFERASE RELATED"/>
    <property type="match status" value="1"/>
</dbReference>
<dbReference type="PANTHER" id="PTHR21091:SF169">
    <property type="entry name" value="UROPORPHYRINOGEN DECARBOXYLASE"/>
    <property type="match status" value="1"/>
</dbReference>
<dbReference type="Pfam" id="PF01208">
    <property type="entry name" value="URO-D"/>
    <property type="match status" value="1"/>
</dbReference>
<dbReference type="SUPFAM" id="SSF51726">
    <property type="entry name" value="UROD/MetE-like"/>
    <property type="match status" value="1"/>
</dbReference>
<dbReference type="PROSITE" id="PS00906">
    <property type="entry name" value="UROD_1"/>
    <property type="match status" value="1"/>
</dbReference>
<dbReference type="PROSITE" id="PS00907">
    <property type="entry name" value="UROD_2"/>
    <property type="match status" value="1"/>
</dbReference>
<protein>
    <recommendedName>
        <fullName evidence="1">Uroporphyrinogen decarboxylase</fullName>
        <shortName evidence="1">UPD</shortName>
        <shortName evidence="1">URO-D</shortName>
        <ecNumber evidence="1">4.1.1.37</ecNumber>
    </recommendedName>
</protein>
<proteinExistence type="inferred from homology"/>
<sequence>MKQIINPLKGNNDKVPIWFMRQAGRYLPEYKKVRETTKNFLDFCYDVSKATEVTLQPIKRYGFDAAIIFSDILVLPHALGWEVDFKENIGPILKQFKSQEDFKYLQINPNYKLEKVYEIIKKVKKELPSPISLIGFAGSPWTVMSYMLEGKGKQDFKTSKKFIYENKILAEELLNFITEKTADHLINQAKSGADVLKLFDSWSGVLAEEEFTKFVIEPTKKIILKVKEVFPKTPIIAFPKGAGLLYEKFIKEVPIDVLAVDQMVPLEKMKEWSDKVIVQGNLDPVVLLTNKEIIKEKTYKILQAMKGKNFIFNLGHGILPETPTENVEFLTEYVRLYEEKNSNSTF</sequence>